<protein>
    <recommendedName>
        <fullName evidence="1">Large ribosomal subunit protein uL3</fullName>
    </recommendedName>
    <alternativeName>
        <fullName evidence="3">50S ribosomal protein L3</fullName>
    </alternativeName>
</protein>
<organism>
    <name type="scientific">Exiguobacterium sibiricum (strain DSM 17290 / CCUG 55495 / CIP 109462 / JCM 13490 / 255-15)</name>
    <dbReference type="NCBI Taxonomy" id="262543"/>
    <lineage>
        <taxon>Bacteria</taxon>
        <taxon>Bacillati</taxon>
        <taxon>Bacillota</taxon>
        <taxon>Bacilli</taxon>
        <taxon>Bacillales</taxon>
        <taxon>Bacillales Family XII. Incertae Sedis</taxon>
        <taxon>Exiguobacterium</taxon>
    </lineage>
</organism>
<gene>
    <name evidence="1" type="primary">rplC</name>
    <name type="ordered locus">Exig_0096</name>
</gene>
<evidence type="ECO:0000255" key="1">
    <source>
        <dbReference type="HAMAP-Rule" id="MF_01325"/>
    </source>
</evidence>
<evidence type="ECO:0000256" key="2">
    <source>
        <dbReference type="SAM" id="MobiDB-lite"/>
    </source>
</evidence>
<evidence type="ECO:0000305" key="3"/>
<feature type="chain" id="PRO_1000141869" description="Large ribosomal subunit protein uL3">
    <location>
        <begin position="1"/>
        <end position="208"/>
    </location>
</feature>
<feature type="region of interest" description="Disordered" evidence="2">
    <location>
        <begin position="126"/>
        <end position="150"/>
    </location>
</feature>
<name>RL3_EXIS2</name>
<sequence>MAKGILGTKLGMTQIFNESGEVVPVTVVSVEGNVVLQLKTMEVDGYEAVQLGFGDIKEGRQNKPQKGHAAKASATPKRFIKEIRTSVTDFEIGQEIKADTFAAGEMVDVTGTSKGKGFAGAIKRHNQSRGPMAHGSRYHRRPGSMGPVAPNRVFKGKLLPGRMGGEQVTVQNLEIVKVDVERGLLLVKGAIPGARKSQVVVKTAVKGN</sequence>
<proteinExistence type="inferred from homology"/>
<dbReference type="EMBL" id="CP001022">
    <property type="protein sequence ID" value="ACB59583.1"/>
    <property type="molecule type" value="Genomic_DNA"/>
</dbReference>
<dbReference type="RefSeq" id="WP_012369009.1">
    <property type="nucleotide sequence ID" value="NC_010556.1"/>
</dbReference>
<dbReference type="SMR" id="B1YGV0"/>
<dbReference type="STRING" id="262543.Exig_0096"/>
<dbReference type="KEGG" id="esi:Exig_0096"/>
<dbReference type="eggNOG" id="COG0087">
    <property type="taxonomic scope" value="Bacteria"/>
</dbReference>
<dbReference type="HOGENOM" id="CLU_044142_4_1_9"/>
<dbReference type="OrthoDB" id="9806135at2"/>
<dbReference type="Proteomes" id="UP000001681">
    <property type="component" value="Chromosome"/>
</dbReference>
<dbReference type="GO" id="GO:0022625">
    <property type="term" value="C:cytosolic large ribosomal subunit"/>
    <property type="evidence" value="ECO:0007669"/>
    <property type="project" value="TreeGrafter"/>
</dbReference>
<dbReference type="GO" id="GO:0019843">
    <property type="term" value="F:rRNA binding"/>
    <property type="evidence" value="ECO:0007669"/>
    <property type="project" value="UniProtKB-UniRule"/>
</dbReference>
<dbReference type="GO" id="GO:0003735">
    <property type="term" value="F:structural constituent of ribosome"/>
    <property type="evidence" value="ECO:0007669"/>
    <property type="project" value="InterPro"/>
</dbReference>
<dbReference type="GO" id="GO:0006412">
    <property type="term" value="P:translation"/>
    <property type="evidence" value="ECO:0007669"/>
    <property type="project" value="UniProtKB-UniRule"/>
</dbReference>
<dbReference type="FunFam" id="2.40.30.10:FF:000004">
    <property type="entry name" value="50S ribosomal protein L3"/>
    <property type="match status" value="1"/>
</dbReference>
<dbReference type="FunFam" id="3.30.160.810:FF:000002">
    <property type="entry name" value="50S ribosomal protein L3"/>
    <property type="match status" value="1"/>
</dbReference>
<dbReference type="Gene3D" id="3.30.160.810">
    <property type="match status" value="1"/>
</dbReference>
<dbReference type="Gene3D" id="2.40.30.10">
    <property type="entry name" value="Translation factors"/>
    <property type="match status" value="1"/>
</dbReference>
<dbReference type="HAMAP" id="MF_01325_B">
    <property type="entry name" value="Ribosomal_uL3_B"/>
    <property type="match status" value="1"/>
</dbReference>
<dbReference type="InterPro" id="IPR000597">
    <property type="entry name" value="Ribosomal_uL3"/>
</dbReference>
<dbReference type="InterPro" id="IPR019927">
    <property type="entry name" value="Ribosomal_uL3_bac/org-type"/>
</dbReference>
<dbReference type="InterPro" id="IPR019926">
    <property type="entry name" value="Ribosomal_uL3_CS"/>
</dbReference>
<dbReference type="InterPro" id="IPR009000">
    <property type="entry name" value="Transl_B-barrel_sf"/>
</dbReference>
<dbReference type="NCBIfam" id="TIGR03625">
    <property type="entry name" value="L3_bact"/>
    <property type="match status" value="1"/>
</dbReference>
<dbReference type="PANTHER" id="PTHR11229">
    <property type="entry name" value="50S RIBOSOMAL PROTEIN L3"/>
    <property type="match status" value="1"/>
</dbReference>
<dbReference type="PANTHER" id="PTHR11229:SF16">
    <property type="entry name" value="LARGE RIBOSOMAL SUBUNIT PROTEIN UL3C"/>
    <property type="match status" value="1"/>
</dbReference>
<dbReference type="Pfam" id="PF00297">
    <property type="entry name" value="Ribosomal_L3"/>
    <property type="match status" value="1"/>
</dbReference>
<dbReference type="SUPFAM" id="SSF50447">
    <property type="entry name" value="Translation proteins"/>
    <property type="match status" value="1"/>
</dbReference>
<dbReference type="PROSITE" id="PS00474">
    <property type="entry name" value="RIBOSOMAL_L3"/>
    <property type="match status" value="1"/>
</dbReference>
<reference key="1">
    <citation type="submission" date="2008-04" db="EMBL/GenBank/DDBJ databases">
        <title>Complete sequence of chromosome of Exiguobacterium sibiricum 255-15.</title>
        <authorList>
            <consortium name="US DOE Joint Genome Institute"/>
            <person name="Copeland A."/>
            <person name="Lucas S."/>
            <person name="Lapidus A."/>
            <person name="Glavina del Rio T."/>
            <person name="Dalin E."/>
            <person name="Tice H."/>
            <person name="Bruce D."/>
            <person name="Goodwin L."/>
            <person name="Pitluck S."/>
            <person name="Kiss H."/>
            <person name="Chertkov O."/>
            <person name="Monk C."/>
            <person name="Brettin T."/>
            <person name="Detter J.C."/>
            <person name="Han C."/>
            <person name="Kuske C.R."/>
            <person name="Schmutz J."/>
            <person name="Larimer F."/>
            <person name="Land M."/>
            <person name="Hauser L."/>
            <person name="Kyrpides N."/>
            <person name="Mikhailova N."/>
            <person name="Vishnivetskaya T."/>
            <person name="Rodrigues D.F."/>
            <person name="Gilichinsky D."/>
            <person name="Tiedje J."/>
            <person name="Richardson P."/>
        </authorList>
    </citation>
    <scope>NUCLEOTIDE SEQUENCE [LARGE SCALE GENOMIC DNA]</scope>
    <source>
        <strain>DSM 17290 / CCUG 55495 / CIP 109462 / JCM 13490 / 255-15</strain>
    </source>
</reference>
<keyword id="KW-1185">Reference proteome</keyword>
<keyword id="KW-0687">Ribonucleoprotein</keyword>
<keyword id="KW-0689">Ribosomal protein</keyword>
<keyword id="KW-0694">RNA-binding</keyword>
<keyword id="KW-0699">rRNA-binding</keyword>
<comment type="function">
    <text evidence="1">One of the primary rRNA binding proteins, it binds directly near the 3'-end of the 23S rRNA, where it nucleates assembly of the 50S subunit.</text>
</comment>
<comment type="subunit">
    <text evidence="1">Part of the 50S ribosomal subunit. Forms a cluster with proteins L14 and L19.</text>
</comment>
<comment type="similarity">
    <text evidence="1">Belongs to the universal ribosomal protein uL3 family.</text>
</comment>
<accession>B1YGV0</accession>